<dbReference type="EC" id="3.6.-.-" evidence="1"/>
<dbReference type="EMBL" id="BX548175">
    <property type="protein sequence ID" value="CAE22248.1"/>
    <property type="molecule type" value="Genomic_DNA"/>
</dbReference>
<dbReference type="RefSeq" id="WP_011131438.1">
    <property type="nucleotide sequence ID" value="NC_005071.1"/>
</dbReference>
<dbReference type="SMR" id="Q7V491"/>
<dbReference type="KEGG" id="pmt:PMT_2074"/>
<dbReference type="eggNOG" id="COG0486">
    <property type="taxonomic scope" value="Bacteria"/>
</dbReference>
<dbReference type="HOGENOM" id="CLU_019624_4_2_3"/>
<dbReference type="OrthoDB" id="9805918at2"/>
<dbReference type="Proteomes" id="UP000001423">
    <property type="component" value="Chromosome"/>
</dbReference>
<dbReference type="GO" id="GO:0005829">
    <property type="term" value="C:cytosol"/>
    <property type="evidence" value="ECO:0007669"/>
    <property type="project" value="TreeGrafter"/>
</dbReference>
<dbReference type="GO" id="GO:0005525">
    <property type="term" value="F:GTP binding"/>
    <property type="evidence" value="ECO:0007669"/>
    <property type="project" value="UniProtKB-UniRule"/>
</dbReference>
<dbReference type="GO" id="GO:0003924">
    <property type="term" value="F:GTPase activity"/>
    <property type="evidence" value="ECO:0007669"/>
    <property type="project" value="UniProtKB-UniRule"/>
</dbReference>
<dbReference type="GO" id="GO:0046872">
    <property type="term" value="F:metal ion binding"/>
    <property type="evidence" value="ECO:0007669"/>
    <property type="project" value="UniProtKB-KW"/>
</dbReference>
<dbReference type="GO" id="GO:0030488">
    <property type="term" value="P:tRNA methylation"/>
    <property type="evidence" value="ECO:0007669"/>
    <property type="project" value="TreeGrafter"/>
</dbReference>
<dbReference type="GO" id="GO:0002098">
    <property type="term" value="P:tRNA wobble uridine modification"/>
    <property type="evidence" value="ECO:0007669"/>
    <property type="project" value="TreeGrafter"/>
</dbReference>
<dbReference type="CDD" id="cd04164">
    <property type="entry name" value="trmE"/>
    <property type="match status" value="1"/>
</dbReference>
<dbReference type="CDD" id="cd14858">
    <property type="entry name" value="TrmE_N"/>
    <property type="match status" value="1"/>
</dbReference>
<dbReference type="Gene3D" id="3.40.50.300">
    <property type="entry name" value="P-loop containing nucleotide triphosphate hydrolases"/>
    <property type="match status" value="1"/>
</dbReference>
<dbReference type="Gene3D" id="3.30.1360.120">
    <property type="entry name" value="Probable tRNA modification gtpase trme, domain 1"/>
    <property type="match status" value="1"/>
</dbReference>
<dbReference type="Gene3D" id="1.20.120.430">
    <property type="entry name" value="tRNA modification GTPase MnmE domain 2"/>
    <property type="match status" value="1"/>
</dbReference>
<dbReference type="HAMAP" id="MF_00379">
    <property type="entry name" value="GTPase_MnmE"/>
    <property type="match status" value="1"/>
</dbReference>
<dbReference type="InterPro" id="IPR031168">
    <property type="entry name" value="G_TrmE"/>
</dbReference>
<dbReference type="InterPro" id="IPR006073">
    <property type="entry name" value="GTP-bd"/>
</dbReference>
<dbReference type="InterPro" id="IPR018948">
    <property type="entry name" value="GTP-bd_TrmE_N"/>
</dbReference>
<dbReference type="InterPro" id="IPR004520">
    <property type="entry name" value="GTPase_MnmE"/>
</dbReference>
<dbReference type="InterPro" id="IPR027368">
    <property type="entry name" value="MnmE_dom2"/>
</dbReference>
<dbReference type="InterPro" id="IPR025867">
    <property type="entry name" value="MnmE_helical"/>
</dbReference>
<dbReference type="InterPro" id="IPR027417">
    <property type="entry name" value="P-loop_NTPase"/>
</dbReference>
<dbReference type="InterPro" id="IPR005225">
    <property type="entry name" value="Small_GTP-bd"/>
</dbReference>
<dbReference type="InterPro" id="IPR027266">
    <property type="entry name" value="TrmE/GcvT_dom1"/>
</dbReference>
<dbReference type="NCBIfam" id="TIGR00450">
    <property type="entry name" value="mnmE_trmE_thdF"/>
    <property type="match status" value="1"/>
</dbReference>
<dbReference type="NCBIfam" id="NF003661">
    <property type="entry name" value="PRK05291.1-3"/>
    <property type="match status" value="1"/>
</dbReference>
<dbReference type="NCBIfam" id="TIGR00231">
    <property type="entry name" value="small_GTP"/>
    <property type="match status" value="1"/>
</dbReference>
<dbReference type="PANTHER" id="PTHR42714">
    <property type="entry name" value="TRNA MODIFICATION GTPASE GTPBP3"/>
    <property type="match status" value="1"/>
</dbReference>
<dbReference type="PANTHER" id="PTHR42714:SF2">
    <property type="entry name" value="TRNA MODIFICATION GTPASE GTPBP3, MITOCHONDRIAL"/>
    <property type="match status" value="1"/>
</dbReference>
<dbReference type="Pfam" id="PF01926">
    <property type="entry name" value="MMR_HSR1"/>
    <property type="match status" value="1"/>
</dbReference>
<dbReference type="Pfam" id="PF12631">
    <property type="entry name" value="MnmE_helical"/>
    <property type="match status" value="1"/>
</dbReference>
<dbReference type="Pfam" id="PF10396">
    <property type="entry name" value="TrmE_N"/>
    <property type="match status" value="1"/>
</dbReference>
<dbReference type="PRINTS" id="PR00449">
    <property type="entry name" value="RASTRNSFRMNG"/>
</dbReference>
<dbReference type="SUPFAM" id="SSF52540">
    <property type="entry name" value="P-loop containing nucleoside triphosphate hydrolases"/>
    <property type="match status" value="1"/>
</dbReference>
<dbReference type="PROSITE" id="PS51709">
    <property type="entry name" value="G_TRME"/>
    <property type="match status" value="1"/>
</dbReference>
<name>MNME_PROMM</name>
<gene>
    <name evidence="1" type="primary">mnmE</name>
    <name evidence="1" type="synonym">trmE</name>
    <name type="ordered locus">PMT_2074</name>
</gene>
<accession>Q7V491</accession>
<evidence type="ECO:0000255" key="1">
    <source>
        <dbReference type="HAMAP-Rule" id="MF_00379"/>
    </source>
</evidence>
<sequence length="470" mass="50499">MMSSPIPHQQTIAAVATAVAPGQGGIAVVRLSGPAAEVVGRSVVSIPGQQLWVSHRVLYGHVMDESGKERIDEVLVLLMKGPRSFTGEDVVEIHCHGGLMAVQRVLERVLAQPHVRRALPGEFSQRAVLNGRLDLTQAEAISELVAARSRRAAQLAMTGVDGGIQRRITSLRERLLDQLSELEARVDFEEDLPPLDGAELLLELQCVRRELEQLVEDAKRGDVLRQGLQVALVGRPNVGKSSLLNRLSRRERAIVTDLPGTTRDVLESEIVLEGVPITLVDTAGIRATQDALEQLGIDRSHQALAAADVAVLVFDLSLGWTADDAALLAQIPDDLPRLLVGNKADLQPASMAASLMVASLGNEVDGKTVDVMLSALTGQGEEALIKAVLKTCGASEAQGLVVALNQRQQDLAAAAAIALARTQEAAEHQLPWDFWTIDLRQAISSLGEITGEEITEAVLDRIFSRFCIGK</sequence>
<comment type="function">
    <text evidence="1">Exhibits a very high intrinsic GTPase hydrolysis rate. Involved in the addition of a carboxymethylaminomethyl (cmnm) group at the wobble position (U34) of certain tRNAs, forming tRNA-cmnm(5)s(2)U34.</text>
</comment>
<comment type="cofactor">
    <cofactor evidence="1">
        <name>K(+)</name>
        <dbReference type="ChEBI" id="CHEBI:29103"/>
    </cofactor>
    <text evidence="1">Binds 1 potassium ion per subunit.</text>
</comment>
<comment type="subunit">
    <text evidence="1">Homodimer. Heterotetramer of two MnmE and two MnmG subunits.</text>
</comment>
<comment type="subcellular location">
    <subcellularLocation>
        <location evidence="1">Cytoplasm</location>
    </subcellularLocation>
</comment>
<comment type="similarity">
    <text evidence="1">Belongs to the TRAFAC class TrmE-Era-EngA-EngB-Septin-like GTPase superfamily. TrmE GTPase family.</text>
</comment>
<organism>
    <name type="scientific">Prochlorococcus marinus (strain MIT 9313)</name>
    <dbReference type="NCBI Taxonomy" id="74547"/>
    <lineage>
        <taxon>Bacteria</taxon>
        <taxon>Bacillati</taxon>
        <taxon>Cyanobacteriota</taxon>
        <taxon>Cyanophyceae</taxon>
        <taxon>Synechococcales</taxon>
        <taxon>Prochlorococcaceae</taxon>
        <taxon>Prochlorococcus</taxon>
    </lineage>
</organism>
<reference key="1">
    <citation type="journal article" date="2003" name="Nature">
        <title>Genome divergence in two Prochlorococcus ecotypes reflects oceanic niche differentiation.</title>
        <authorList>
            <person name="Rocap G."/>
            <person name="Larimer F.W."/>
            <person name="Lamerdin J.E."/>
            <person name="Malfatti S."/>
            <person name="Chain P."/>
            <person name="Ahlgren N.A."/>
            <person name="Arellano A."/>
            <person name="Coleman M."/>
            <person name="Hauser L."/>
            <person name="Hess W.R."/>
            <person name="Johnson Z.I."/>
            <person name="Land M.L."/>
            <person name="Lindell D."/>
            <person name="Post A.F."/>
            <person name="Regala W."/>
            <person name="Shah M."/>
            <person name="Shaw S.L."/>
            <person name="Steglich C."/>
            <person name="Sullivan M.B."/>
            <person name="Ting C.S."/>
            <person name="Tolonen A."/>
            <person name="Webb E.A."/>
            <person name="Zinser E.R."/>
            <person name="Chisholm S.W."/>
        </authorList>
    </citation>
    <scope>NUCLEOTIDE SEQUENCE [LARGE SCALE GENOMIC DNA]</scope>
    <source>
        <strain>MIT 9313</strain>
    </source>
</reference>
<proteinExistence type="inferred from homology"/>
<feature type="chain" id="PRO_0000188902" description="tRNA modification GTPase MnmE">
    <location>
        <begin position="1"/>
        <end position="470"/>
    </location>
</feature>
<feature type="domain" description="TrmE-type G">
    <location>
        <begin position="227"/>
        <end position="393"/>
    </location>
</feature>
<feature type="binding site" evidence="1">
    <location>
        <position position="30"/>
    </location>
    <ligand>
        <name>(6S)-5-formyl-5,6,7,8-tetrahydrofolate</name>
        <dbReference type="ChEBI" id="CHEBI:57457"/>
    </ligand>
</feature>
<feature type="binding site" evidence="1">
    <location>
        <position position="92"/>
    </location>
    <ligand>
        <name>(6S)-5-formyl-5,6,7,8-tetrahydrofolate</name>
        <dbReference type="ChEBI" id="CHEBI:57457"/>
    </ligand>
</feature>
<feature type="binding site" evidence="1">
    <location>
        <position position="132"/>
    </location>
    <ligand>
        <name>(6S)-5-formyl-5,6,7,8-tetrahydrofolate</name>
        <dbReference type="ChEBI" id="CHEBI:57457"/>
    </ligand>
</feature>
<feature type="binding site" evidence="1">
    <location>
        <begin position="237"/>
        <end position="242"/>
    </location>
    <ligand>
        <name>GTP</name>
        <dbReference type="ChEBI" id="CHEBI:37565"/>
    </ligand>
</feature>
<feature type="binding site" evidence="1">
    <location>
        <position position="237"/>
    </location>
    <ligand>
        <name>K(+)</name>
        <dbReference type="ChEBI" id="CHEBI:29103"/>
    </ligand>
</feature>
<feature type="binding site" evidence="1">
    <location>
        <position position="241"/>
    </location>
    <ligand>
        <name>Mg(2+)</name>
        <dbReference type="ChEBI" id="CHEBI:18420"/>
    </ligand>
</feature>
<feature type="binding site" evidence="1">
    <location>
        <begin position="256"/>
        <end position="262"/>
    </location>
    <ligand>
        <name>GTP</name>
        <dbReference type="ChEBI" id="CHEBI:37565"/>
    </ligand>
</feature>
<feature type="binding site" evidence="1">
    <location>
        <position position="256"/>
    </location>
    <ligand>
        <name>K(+)</name>
        <dbReference type="ChEBI" id="CHEBI:29103"/>
    </ligand>
</feature>
<feature type="binding site" evidence="1">
    <location>
        <position position="258"/>
    </location>
    <ligand>
        <name>K(+)</name>
        <dbReference type="ChEBI" id="CHEBI:29103"/>
    </ligand>
</feature>
<feature type="binding site" evidence="1">
    <location>
        <position position="261"/>
    </location>
    <ligand>
        <name>K(+)</name>
        <dbReference type="ChEBI" id="CHEBI:29103"/>
    </ligand>
</feature>
<feature type="binding site" evidence="1">
    <location>
        <position position="262"/>
    </location>
    <ligand>
        <name>Mg(2+)</name>
        <dbReference type="ChEBI" id="CHEBI:18420"/>
    </ligand>
</feature>
<feature type="binding site" evidence="1">
    <location>
        <begin position="281"/>
        <end position="284"/>
    </location>
    <ligand>
        <name>GTP</name>
        <dbReference type="ChEBI" id="CHEBI:37565"/>
    </ligand>
</feature>
<feature type="binding site" evidence="1">
    <location>
        <begin position="342"/>
        <end position="345"/>
    </location>
    <ligand>
        <name>GTP</name>
        <dbReference type="ChEBI" id="CHEBI:37565"/>
    </ligand>
</feature>
<feature type="binding site" evidence="1">
    <location>
        <position position="470"/>
    </location>
    <ligand>
        <name>(6S)-5-formyl-5,6,7,8-tetrahydrofolate</name>
        <dbReference type="ChEBI" id="CHEBI:57457"/>
    </ligand>
</feature>
<keyword id="KW-0963">Cytoplasm</keyword>
<keyword id="KW-0342">GTP-binding</keyword>
<keyword id="KW-0378">Hydrolase</keyword>
<keyword id="KW-0460">Magnesium</keyword>
<keyword id="KW-0479">Metal-binding</keyword>
<keyword id="KW-0547">Nucleotide-binding</keyword>
<keyword id="KW-0630">Potassium</keyword>
<keyword id="KW-1185">Reference proteome</keyword>
<keyword id="KW-0819">tRNA processing</keyword>
<protein>
    <recommendedName>
        <fullName evidence="1">tRNA modification GTPase MnmE</fullName>
        <ecNumber evidence="1">3.6.-.-</ecNumber>
    </recommendedName>
</protein>